<accession>A7ZX94</accession>
<keyword id="KW-0131">Cell cycle</keyword>
<keyword id="KW-0132">Cell division</keyword>
<keyword id="KW-0143">Chaperone</keyword>
<keyword id="KW-0963">Cytoplasm</keyword>
<keyword id="KW-0413">Isomerase</keyword>
<keyword id="KW-0697">Rotamase</keyword>
<protein>
    <recommendedName>
        <fullName evidence="1">Trigger factor</fullName>
        <shortName evidence="1">TF</shortName>
        <ecNumber evidence="1">5.2.1.8</ecNumber>
    </recommendedName>
    <alternativeName>
        <fullName evidence="1">PPIase</fullName>
    </alternativeName>
</protein>
<dbReference type="EC" id="5.2.1.8" evidence="1"/>
<dbReference type="EMBL" id="CP000802">
    <property type="protein sequence ID" value="ABV04898.1"/>
    <property type="molecule type" value="Genomic_DNA"/>
</dbReference>
<dbReference type="RefSeq" id="WP_001198386.1">
    <property type="nucleotide sequence ID" value="NC_009800.1"/>
</dbReference>
<dbReference type="BMRB" id="A7ZX94"/>
<dbReference type="SMR" id="A7ZX94"/>
<dbReference type="GeneID" id="75202861"/>
<dbReference type="KEGG" id="ecx:EcHS_A0513"/>
<dbReference type="HOGENOM" id="CLU_033058_2_0_6"/>
<dbReference type="GO" id="GO:0005737">
    <property type="term" value="C:cytoplasm"/>
    <property type="evidence" value="ECO:0007669"/>
    <property type="project" value="UniProtKB-SubCell"/>
</dbReference>
<dbReference type="GO" id="GO:0003755">
    <property type="term" value="F:peptidyl-prolyl cis-trans isomerase activity"/>
    <property type="evidence" value="ECO:0007669"/>
    <property type="project" value="UniProtKB-UniRule"/>
</dbReference>
<dbReference type="GO" id="GO:0044183">
    <property type="term" value="F:protein folding chaperone"/>
    <property type="evidence" value="ECO:0007669"/>
    <property type="project" value="TreeGrafter"/>
</dbReference>
<dbReference type="GO" id="GO:0043022">
    <property type="term" value="F:ribosome binding"/>
    <property type="evidence" value="ECO:0007669"/>
    <property type="project" value="TreeGrafter"/>
</dbReference>
<dbReference type="GO" id="GO:0051083">
    <property type="term" value="P:'de novo' cotranslational protein folding"/>
    <property type="evidence" value="ECO:0007669"/>
    <property type="project" value="TreeGrafter"/>
</dbReference>
<dbReference type="GO" id="GO:0051301">
    <property type="term" value="P:cell division"/>
    <property type="evidence" value="ECO:0007669"/>
    <property type="project" value="UniProtKB-KW"/>
</dbReference>
<dbReference type="GO" id="GO:0061077">
    <property type="term" value="P:chaperone-mediated protein folding"/>
    <property type="evidence" value="ECO:0007669"/>
    <property type="project" value="TreeGrafter"/>
</dbReference>
<dbReference type="GO" id="GO:0015031">
    <property type="term" value="P:protein transport"/>
    <property type="evidence" value="ECO:0007669"/>
    <property type="project" value="UniProtKB-UniRule"/>
</dbReference>
<dbReference type="GO" id="GO:0043335">
    <property type="term" value="P:protein unfolding"/>
    <property type="evidence" value="ECO:0007669"/>
    <property type="project" value="TreeGrafter"/>
</dbReference>
<dbReference type="FunFam" id="1.10.3120.10:FF:000001">
    <property type="entry name" value="Trigger factor"/>
    <property type="match status" value="1"/>
</dbReference>
<dbReference type="FunFam" id="3.10.50.40:FF:000001">
    <property type="entry name" value="Trigger factor"/>
    <property type="match status" value="1"/>
</dbReference>
<dbReference type="FunFam" id="3.30.70.1050:FF:000001">
    <property type="entry name" value="Trigger factor"/>
    <property type="match status" value="1"/>
</dbReference>
<dbReference type="Gene3D" id="3.10.50.40">
    <property type="match status" value="1"/>
</dbReference>
<dbReference type="Gene3D" id="3.30.70.1050">
    <property type="entry name" value="Trigger factor ribosome-binding domain"/>
    <property type="match status" value="1"/>
</dbReference>
<dbReference type="Gene3D" id="1.10.3120.10">
    <property type="entry name" value="Trigger factor, C-terminal domain"/>
    <property type="match status" value="1"/>
</dbReference>
<dbReference type="HAMAP" id="MF_00303">
    <property type="entry name" value="Trigger_factor_Tig"/>
    <property type="match status" value="1"/>
</dbReference>
<dbReference type="InterPro" id="IPR046357">
    <property type="entry name" value="PPIase_dom_sf"/>
</dbReference>
<dbReference type="InterPro" id="IPR001179">
    <property type="entry name" value="PPIase_FKBP_dom"/>
</dbReference>
<dbReference type="InterPro" id="IPR005215">
    <property type="entry name" value="Trig_fac"/>
</dbReference>
<dbReference type="InterPro" id="IPR008880">
    <property type="entry name" value="Trigger_fac_C"/>
</dbReference>
<dbReference type="InterPro" id="IPR037041">
    <property type="entry name" value="Trigger_fac_C_sf"/>
</dbReference>
<dbReference type="InterPro" id="IPR008881">
    <property type="entry name" value="Trigger_fac_ribosome-bd_bac"/>
</dbReference>
<dbReference type="InterPro" id="IPR036611">
    <property type="entry name" value="Trigger_fac_ribosome-bd_sf"/>
</dbReference>
<dbReference type="InterPro" id="IPR027304">
    <property type="entry name" value="Trigger_fact/SurA_dom_sf"/>
</dbReference>
<dbReference type="NCBIfam" id="TIGR00115">
    <property type="entry name" value="tig"/>
    <property type="match status" value="1"/>
</dbReference>
<dbReference type="PANTHER" id="PTHR30560">
    <property type="entry name" value="TRIGGER FACTOR CHAPERONE AND PEPTIDYL-PROLYL CIS/TRANS ISOMERASE"/>
    <property type="match status" value="1"/>
</dbReference>
<dbReference type="PANTHER" id="PTHR30560:SF3">
    <property type="entry name" value="TRIGGER FACTOR-LIKE PROTEIN TIG, CHLOROPLASTIC"/>
    <property type="match status" value="1"/>
</dbReference>
<dbReference type="Pfam" id="PF00254">
    <property type="entry name" value="FKBP_C"/>
    <property type="match status" value="1"/>
</dbReference>
<dbReference type="Pfam" id="PF05698">
    <property type="entry name" value="Trigger_C"/>
    <property type="match status" value="1"/>
</dbReference>
<dbReference type="Pfam" id="PF05697">
    <property type="entry name" value="Trigger_N"/>
    <property type="match status" value="1"/>
</dbReference>
<dbReference type="PIRSF" id="PIRSF003095">
    <property type="entry name" value="Trigger_factor"/>
    <property type="match status" value="1"/>
</dbReference>
<dbReference type="SUPFAM" id="SSF54534">
    <property type="entry name" value="FKBP-like"/>
    <property type="match status" value="1"/>
</dbReference>
<dbReference type="SUPFAM" id="SSF109998">
    <property type="entry name" value="Triger factor/SurA peptide-binding domain-like"/>
    <property type="match status" value="1"/>
</dbReference>
<dbReference type="SUPFAM" id="SSF102735">
    <property type="entry name" value="Trigger factor ribosome-binding domain"/>
    <property type="match status" value="1"/>
</dbReference>
<dbReference type="PROSITE" id="PS50059">
    <property type="entry name" value="FKBP_PPIASE"/>
    <property type="match status" value="1"/>
</dbReference>
<comment type="function">
    <text evidence="1">Involved in protein export. Acts as a chaperone by maintaining the newly synthesized protein in an open conformation. Functions as a peptidyl-prolyl cis-trans isomerase.</text>
</comment>
<comment type="catalytic activity">
    <reaction evidence="1">
        <text>[protein]-peptidylproline (omega=180) = [protein]-peptidylproline (omega=0)</text>
        <dbReference type="Rhea" id="RHEA:16237"/>
        <dbReference type="Rhea" id="RHEA-COMP:10747"/>
        <dbReference type="Rhea" id="RHEA-COMP:10748"/>
        <dbReference type="ChEBI" id="CHEBI:83833"/>
        <dbReference type="ChEBI" id="CHEBI:83834"/>
        <dbReference type="EC" id="5.2.1.8"/>
    </reaction>
</comment>
<comment type="subunit">
    <text evidence="1">Homodimer and monomer. In vivo most of the ribosomes are in complex with monomeric TF. Uncomplexed TF, however, is in a monomer-dimer equilibrium with approximately two thirds of TF existing in a dimeric state.</text>
</comment>
<comment type="subcellular location">
    <subcellularLocation>
        <location>Cytoplasm</location>
    </subcellularLocation>
    <text evidence="1">About half TF is bound to the ribosome near the polypeptide exit tunnel while the other half is free in the cytoplasm.</text>
</comment>
<comment type="domain">
    <text evidence="1">Consists of 3 domains; the N-terminus binds the ribosome, the middle domain has PPIase activity, while the C-terminus has intrinsic chaperone activity on its own.</text>
</comment>
<comment type="similarity">
    <text evidence="1">Belongs to the FKBP-type PPIase family. Tig subfamily.</text>
</comment>
<evidence type="ECO:0000255" key="1">
    <source>
        <dbReference type="HAMAP-Rule" id="MF_00303"/>
    </source>
</evidence>
<name>TIG_ECOHS</name>
<proteinExistence type="inferred from homology"/>
<organism>
    <name type="scientific">Escherichia coli O9:H4 (strain HS)</name>
    <dbReference type="NCBI Taxonomy" id="331112"/>
    <lineage>
        <taxon>Bacteria</taxon>
        <taxon>Pseudomonadati</taxon>
        <taxon>Pseudomonadota</taxon>
        <taxon>Gammaproteobacteria</taxon>
        <taxon>Enterobacterales</taxon>
        <taxon>Enterobacteriaceae</taxon>
        <taxon>Escherichia</taxon>
    </lineage>
</organism>
<feature type="chain" id="PRO_1000059326" description="Trigger factor">
    <location>
        <begin position="1"/>
        <end position="432"/>
    </location>
</feature>
<feature type="domain" description="PPIase FKBP-type" evidence="1">
    <location>
        <begin position="161"/>
        <end position="246"/>
    </location>
</feature>
<reference key="1">
    <citation type="journal article" date="2008" name="J. Bacteriol.">
        <title>The pangenome structure of Escherichia coli: comparative genomic analysis of E. coli commensal and pathogenic isolates.</title>
        <authorList>
            <person name="Rasko D.A."/>
            <person name="Rosovitz M.J."/>
            <person name="Myers G.S.A."/>
            <person name="Mongodin E.F."/>
            <person name="Fricke W.F."/>
            <person name="Gajer P."/>
            <person name="Crabtree J."/>
            <person name="Sebaihia M."/>
            <person name="Thomson N.R."/>
            <person name="Chaudhuri R."/>
            <person name="Henderson I.R."/>
            <person name="Sperandio V."/>
            <person name="Ravel J."/>
        </authorList>
    </citation>
    <scope>NUCLEOTIDE SEQUENCE [LARGE SCALE GENOMIC DNA]</scope>
    <source>
        <strain>HS</strain>
    </source>
</reference>
<sequence>MQVSVETTQGLGRRVTITIAADSIETAVKSELVNVAKKVRIDGFRKGKVPMNIVAQRYGASVRQDVLGDLMSRNFIDAIIKEKINPAGAPTYVPGEYKLGEDFTYSVEFEVYPEVELQGLEAIEVEKPIVEVTDADVDGMLDTLRKQQATWKEKDGAVEAEDRVTIDFTGSVDGEEFEGGKASDFVLAMGQGRMIPGFEDGIKGHKAGEEFTIDVTFPEEYHAENLKGKAAKFAINLKKVEERELPELTAEFIKRFGVEDGSVEGLRAEVRKNMERELKSAIRNRVKSQAIEGLVKANDIDVPAALIDSEIDVLRRQAAQRFGGNEKQALELPRELFEEQAKRRVVVGLLLGEVIRTNELKADEERVKGLIEEMASAYEDPKEVIEFYSKNKELMDNMRNVALEEQAVEAVLAKAKVTEKETTFNELMNQQA</sequence>
<gene>
    <name evidence="1" type="primary">tig</name>
    <name type="ordered locus">EcHS_A0513</name>
</gene>